<proteinExistence type="inferred from homology"/>
<evidence type="ECO:0000250" key="1"/>
<evidence type="ECO:0000250" key="2">
    <source>
        <dbReference type="UniProtKB" id="P0A9P4"/>
    </source>
</evidence>
<evidence type="ECO:0000305" key="3"/>
<feature type="chain" id="PRO_0000166720" description="Thioredoxin reductase">
    <location>
        <begin position="1"/>
        <end position="326"/>
    </location>
</feature>
<feature type="binding site" evidence="2">
    <location>
        <begin position="55"/>
        <end position="62"/>
    </location>
    <ligand>
        <name>FAD</name>
        <dbReference type="ChEBI" id="CHEBI:57692"/>
    </ligand>
</feature>
<feature type="binding site" evidence="2">
    <location>
        <begin position="298"/>
        <end position="307"/>
    </location>
    <ligand>
        <name>FAD</name>
        <dbReference type="ChEBI" id="CHEBI:57692"/>
    </ligand>
</feature>
<feature type="disulfide bond" description="Redox-active" evidence="2">
    <location>
        <begin position="156"/>
        <end position="159"/>
    </location>
</feature>
<feature type="sequence conflict" description="In Ref. 1; AAB41020." evidence="3" ref="1">
    <original>L</original>
    <variation>P</variation>
    <location>
        <position position="303"/>
    </location>
</feature>
<feature type="sequence conflict" description="In Ref. 1; AAB41020." evidence="3" ref="1">
    <original>FIASVELGNFLK</original>
    <variation>LLHLLS</variation>
    <location>
        <begin position="315"/>
        <end position="326"/>
    </location>
</feature>
<protein>
    <recommendedName>
        <fullName>Thioredoxin reductase</fullName>
        <shortName>TRXR</shortName>
        <ecNumber>1.8.1.9</ecNumber>
    </recommendedName>
</protein>
<sequence>MLEFETIDINLTKKKNLSQKEVDFIEDVIIVGSGPAGLTAGIYSVMSNYKAAILEGPEPGGQLTTTTEVYNYPGFKNGISGRNLMLNMREQVVNLGAKTFPETVFSIKRKGNIFYLYTENYIYKSKAVIIAVGSKPKKLETLKNSGLFWNKGISVCAICDGHLFKGKRVAVIGGGNTALSESIYLSKLVDKVYLIVRKNNLRAIAMLRDSVAKLPNIEILYNSEAIEVDGKSSVSSVKIFNKKDNVVYELEVSAVFMAVGYKPNTEFLKGFLDLDEEGFIVTKDVVKTSVDGVFSCGDVSNKLYAQAITAAAEGFIASVELGNFLK</sequence>
<comment type="catalytic activity">
    <reaction>
        <text>[thioredoxin]-dithiol + NADP(+) = [thioredoxin]-disulfide + NADPH + H(+)</text>
        <dbReference type="Rhea" id="RHEA:20345"/>
        <dbReference type="Rhea" id="RHEA-COMP:10698"/>
        <dbReference type="Rhea" id="RHEA-COMP:10700"/>
        <dbReference type="ChEBI" id="CHEBI:15378"/>
        <dbReference type="ChEBI" id="CHEBI:29950"/>
        <dbReference type="ChEBI" id="CHEBI:50058"/>
        <dbReference type="ChEBI" id="CHEBI:57783"/>
        <dbReference type="ChEBI" id="CHEBI:58349"/>
        <dbReference type="EC" id="1.8.1.9"/>
    </reaction>
</comment>
<comment type="cofactor">
    <cofactor evidence="2">
        <name>FAD</name>
        <dbReference type="ChEBI" id="CHEBI:57692"/>
    </cofactor>
    <text evidence="2">Binds 1 FAD per subunit.</text>
</comment>
<comment type="subunit">
    <text evidence="2">Homodimer.</text>
</comment>
<comment type="subcellular location">
    <subcellularLocation>
        <location evidence="1">Cytoplasm</location>
    </subcellularLocation>
</comment>
<comment type="miscellaneous">
    <text>The active site is a redox-active disulfide bond.</text>
</comment>
<comment type="similarity">
    <text evidence="3">Belongs to the class-II pyridine nucleotide-disulfide oxidoreductase family.</text>
</comment>
<keyword id="KW-0963">Cytoplasm</keyword>
<keyword id="KW-1015">Disulfide bond</keyword>
<keyword id="KW-0274">FAD</keyword>
<keyword id="KW-0285">Flavoprotein</keyword>
<keyword id="KW-0521">NADP</keyword>
<keyword id="KW-0560">Oxidoreductase</keyword>
<keyword id="KW-0676">Redox-active center</keyword>
<keyword id="KW-1185">Reference proteome</keyword>
<gene>
    <name type="primary">trxB</name>
    <name type="ordered locus">BB_0515</name>
</gene>
<organism>
    <name type="scientific">Borreliella burgdorferi (strain ATCC 35210 / DSM 4680 / CIP 102532 / B31)</name>
    <name type="common">Borrelia burgdorferi</name>
    <dbReference type="NCBI Taxonomy" id="224326"/>
    <lineage>
        <taxon>Bacteria</taxon>
        <taxon>Pseudomonadati</taxon>
        <taxon>Spirochaetota</taxon>
        <taxon>Spirochaetia</taxon>
        <taxon>Spirochaetales</taxon>
        <taxon>Borreliaceae</taxon>
        <taxon>Borreliella</taxon>
    </lineage>
</organism>
<reference key="1">
    <citation type="submission" date="1997-01" db="EMBL/GenBank/DDBJ databases">
        <title>Phenylalanyl-tRNA synthetase genes (alpha and beta subunits) and thioredoxin reductase gene of Borrelia burgdorferi.</title>
        <authorList>
            <person name="Barbour A.G."/>
            <person name="Hinnebusch J."/>
        </authorList>
    </citation>
    <scope>NUCLEOTIDE SEQUENCE [GENOMIC DNA]</scope>
    <source>
        <strain>ATCC 35210 / DSM 4680 / CIP 102532 / B31</strain>
    </source>
</reference>
<reference key="2">
    <citation type="journal article" date="1997" name="Nature">
        <title>Genomic sequence of a Lyme disease spirochaete, Borrelia burgdorferi.</title>
        <authorList>
            <person name="Fraser C.M."/>
            <person name="Casjens S."/>
            <person name="Huang W.M."/>
            <person name="Sutton G.G."/>
            <person name="Clayton R.A."/>
            <person name="Lathigra R."/>
            <person name="White O."/>
            <person name="Ketchum K.A."/>
            <person name="Dodson R.J."/>
            <person name="Hickey E.K."/>
            <person name="Gwinn M.L."/>
            <person name="Dougherty B.A."/>
            <person name="Tomb J.-F."/>
            <person name="Fleischmann R.D."/>
            <person name="Richardson D.L."/>
            <person name="Peterson J.D."/>
            <person name="Kerlavage A.R."/>
            <person name="Quackenbush J."/>
            <person name="Salzberg S.L."/>
            <person name="Hanson M."/>
            <person name="van Vugt R."/>
            <person name="Palmer N."/>
            <person name="Adams M.D."/>
            <person name="Gocayne J.D."/>
            <person name="Weidman J.F."/>
            <person name="Utterback T.R."/>
            <person name="Watthey L."/>
            <person name="McDonald L.A."/>
            <person name="Artiach P."/>
            <person name="Bowman C."/>
            <person name="Garland S.A."/>
            <person name="Fujii C."/>
            <person name="Cotton M.D."/>
            <person name="Horst K."/>
            <person name="Roberts K.M."/>
            <person name="Hatch B."/>
            <person name="Smith H.O."/>
            <person name="Venter J.C."/>
        </authorList>
    </citation>
    <scope>NUCLEOTIDE SEQUENCE [LARGE SCALE GENOMIC DNA]</scope>
    <source>
        <strain>ATCC 35210 / DSM 4680 / CIP 102532 / B31</strain>
    </source>
</reference>
<accession>P94284</accession>
<accession>O51467</accession>
<dbReference type="EC" id="1.8.1.9"/>
<dbReference type="EMBL" id="U82978">
    <property type="protein sequence ID" value="AAB41020.1"/>
    <property type="molecule type" value="Genomic_DNA"/>
</dbReference>
<dbReference type="EMBL" id="AE000783">
    <property type="status" value="NOT_ANNOTATED_CDS"/>
    <property type="molecule type" value="Genomic_DNA"/>
</dbReference>
<dbReference type="PIR" id="B70164">
    <property type="entry name" value="B70164"/>
</dbReference>
<dbReference type="RefSeq" id="WP_002656440.1">
    <property type="nucleotide sequence ID" value="NC_001318.1"/>
</dbReference>
<dbReference type="RefSeq" id="YP_008686580.1">
    <property type="nucleotide sequence ID" value="NC_001318.1"/>
</dbReference>
<dbReference type="SMR" id="P94284"/>
<dbReference type="PATRIC" id="fig|224326.49.peg.906"/>
<dbReference type="OrthoDB" id="9806179at2"/>
<dbReference type="Proteomes" id="UP000001807">
    <property type="component" value="Chromosome"/>
</dbReference>
<dbReference type="GO" id="GO:0005737">
    <property type="term" value="C:cytoplasm"/>
    <property type="evidence" value="ECO:0007669"/>
    <property type="project" value="UniProtKB-SubCell"/>
</dbReference>
<dbReference type="GO" id="GO:0004791">
    <property type="term" value="F:thioredoxin-disulfide reductase (NADPH) activity"/>
    <property type="evidence" value="ECO:0007669"/>
    <property type="project" value="UniProtKB-EC"/>
</dbReference>
<dbReference type="GO" id="GO:0019430">
    <property type="term" value="P:removal of superoxide radicals"/>
    <property type="evidence" value="ECO:0007669"/>
    <property type="project" value="InterPro"/>
</dbReference>
<dbReference type="Gene3D" id="3.50.50.60">
    <property type="entry name" value="FAD/NAD(P)-binding domain"/>
    <property type="match status" value="2"/>
</dbReference>
<dbReference type="InterPro" id="IPR036188">
    <property type="entry name" value="FAD/NAD-bd_sf"/>
</dbReference>
<dbReference type="InterPro" id="IPR023753">
    <property type="entry name" value="FAD/NAD-binding_dom"/>
</dbReference>
<dbReference type="InterPro" id="IPR050097">
    <property type="entry name" value="Ferredoxin-NADP_redctase_2"/>
</dbReference>
<dbReference type="InterPro" id="IPR008255">
    <property type="entry name" value="Pyr_nucl-diS_OxRdtase_2_AS"/>
</dbReference>
<dbReference type="InterPro" id="IPR005982">
    <property type="entry name" value="Thioredox_Rdtase"/>
</dbReference>
<dbReference type="NCBIfam" id="TIGR01292">
    <property type="entry name" value="TRX_reduct"/>
    <property type="match status" value="1"/>
</dbReference>
<dbReference type="PANTHER" id="PTHR48105">
    <property type="entry name" value="THIOREDOXIN REDUCTASE 1-RELATED-RELATED"/>
    <property type="match status" value="1"/>
</dbReference>
<dbReference type="Pfam" id="PF07992">
    <property type="entry name" value="Pyr_redox_2"/>
    <property type="match status" value="1"/>
</dbReference>
<dbReference type="PRINTS" id="PR00368">
    <property type="entry name" value="FADPNR"/>
</dbReference>
<dbReference type="PRINTS" id="PR00469">
    <property type="entry name" value="PNDRDTASEII"/>
</dbReference>
<dbReference type="SUPFAM" id="SSF51905">
    <property type="entry name" value="FAD/NAD(P)-binding domain"/>
    <property type="match status" value="1"/>
</dbReference>
<dbReference type="PROSITE" id="PS00573">
    <property type="entry name" value="PYRIDINE_REDOX_2"/>
    <property type="match status" value="1"/>
</dbReference>
<name>TRXB_BORBU</name>